<protein>
    <recommendedName>
        <fullName evidence="1">Transcriptional repressor NrdR</fullName>
    </recommendedName>
</protein>
<accession>Q0BTE7</accession>
<keyword id="KW-0067">ATP-binding</keyword>
<keyword id="KW-0238">DNA-binding</keyword>
<keyword id="KW-0479">Metal-binding</keyword>
<keyword id="KW-0547">Nucleotide-binding</keyword>
<keyword id="KW-1185">Reference proteome</keyword>
<keyword id="KW-0678">Repressor</keyword>
<keyword id="KW-0804">Transcription</keyword>
<keyword id="KW-0805">Transcription regulation</keyword>
<keyword id="KW-0862">Zinc</keyword>
<keyword id="KW-0863">Zinc-finger</keyword>
<organism>
    <name type="scientific">Granulibacter bethesdensis (strain ATCC BAA-1260 / CGDNIH1)</name>
    <dbReference type="NCBI Taxonomy" id="391165"/>
    <lineage>
        <taxon>Bacteria</taxon>
        <taxon>Pseudomonadati</taxon>
        <taxon>Pseudomonadota</taxon>
        <taxon>Alphaproteobacteria</taxon>
        <taxon>Acetobacterales</taxon>
        <taxon>Acetobacteraceae</taxon>
        <taxon>Granulibacter</taxon>
    </lineage>
</organism>
<sequence>MRCPFCGHEDTQVKDSRPTDDGTAIRRRRSCTACMQRFTTVERVQLRELIVVKTDQRRVVFDRDKLTRSVQIALRKRPIDPDRIEKMITGIVRQLESSGETEIPSKLIGELVMQTLKEVDDVAYVRFASVYRNFSDAGDFQTFLGGQAASKESDESS</sequence>
<feature type="chain" id="PRO_0000264178" description="Transcriptional repressor NrdR">
    <location>
        <begin position="1"/>
        <end position="157"/>
    </location>
</feature>
<feature type="domain" description="ATP-cone" evidence="1">
    <location>
        <begin position="49"/>
        <end position="139"/>
    </location>
</feature>
<feature type="zinc finger region" evidence="1">
    <location>
        <begin position="3"/>
        <end position="34"/>
    </location>
</feature>
<name>NRDR_GRABC</name>
<evidence type="ECO:0000255" key="1">
    <source>
        <dbReference type="HAMAP-Rule" id="MF_00440"/>
    </source>
</evidence>
<comment type="function">
    <text evidence="1">Negatively regulates transcription of bacterial ribonucleotide reductase nrd genes and operons by binding to NrdR-boxes.</text>
</comment>
<comment type="cofactor">
    <cofactor evidence="1">
        <name>Zn(2+)</name>
        <dbReference type="ChEBI" id="CHEBI:29105"/>
    </cofactor>
    <text evidence="1">Binds 1 zinc ion.</text>
</comment>
<comment type="similarity">
    <text evidence="1">Belongs to the NrdR family.</text>
</comment>
<reference key="1">
    <citation type="journal article" date="2007" name="J. Bacteriol.">
        <title>Genome sequence analysis of the emerging human pathogenic acetic acid bacterium Granulibacter bethesdensis.</title>
        <authorList>
            <person name="Greenberg D.E."/>
            <person name="Porcella S.F."/>
            <person name="Zelazny A.M."/>
            <person name="Virtaneva K."/>
            <person name="Sturdevant D.E."/>
            <person name="Kupko J.J. III"/>
            <person name="Barbian K.D."/>
            <person name="Babar A."/>
            <person name="Dorward D.W."/>
            <person name="Holland S.M."/>
        </authorList>
    </citation>
    <scope>NUCLEOTIDE SEQUENCE [LARGE SCALE GENOMIC DNA]</scope>
    <source>
        <strain>ATCC BAA-1260 / CGDNIH1</strain>
    </source>
</reference>
<proteinExistence type="inferred from homology"/>
<gene>
    <name evidence="1" type="primary">nrdR</name>
    <name type="ordered locus">GbCGDNIH1_1007</name>
</gene>
<dbReference type="EMBL" id="CP000394">
    <property type="protein sequence ID" value="ABI61905.1"/>
    <property type="molecule type" value="Genomic_DNA"/>
</dbReference>
<dbReference type="RefSeq" id="WP_011631714.1">
    <property type="nucleotide sequence ID" value="NC_008343.2"/>
</dbReference>
<dbReference type="SMR" id="Q0BTE7"/>
<dbReference type="STRING" id="391165.GbCGDNIH1_1007"/>
<dbReference type="KEGG" id="gbe:GbCGDNIH1_1007"/>
<dbReference type="eggNOG" id="COG1327">
    <property type="taxonomic scope" value="Bacteria"/>
</dbReference>
<dbReference type="HOGENOM" id="CLU_108412_0_1_5"/>
<dbReference type="OrthoDB" id="9807461at2"/>
<dbReference type="Proteomes" id="UP000001963">
    <property type="component" value="Chromosome"/>
</dbReference>
<dbReference type="GO" id="GO:0005524">
    <property type="term" value="F:ATP binding"/>
    <property type="evidence" value="ECO:0007669"/>
    <property type="project" value="UniProtKB-KW"/>
</dbReference>
<dbReference type="GO" id="GO:0003677">
    <property type="term" value="F:DNA binding"/>
    <property type="evidence" value="ECO:0007669"/>
    <property type="project" value="UniProtKB-KW"/>
</dbReference>
<dbReference type="GO" id="GO:0008270">
    <property type="term" value="F:zinc ion binding"/>
    <property type="evidence" value="ECO:0007669"/>
    <property type="project" value="UniProtKB-UniRule"/>
</dbReference>
<dbReference type="GO" id="GO:0045892">
    <property type="term" value="P:negative regulation of DNA-templated transcription"/>
    <property type="evidence" value="ECO:0007669"/>
    <property type="project" value="UniProtKB-UniRule"/>
</dbReference>
<dbReference type="HAMAP" id="MF_00440">
    <property type="entry name" value="NrdR"/>
    <property type="match status" value="1"/>
</dbReference>
<dbReference type="InterPro" id="IPR005144">
    <property type="entry name" value="ATP-cone_dom"/>
</dbReference>
<dbReference type="InterPro" id="IPR055173">
    <property type="entry name" value="NrdR-like_N"/>
</dbReference>
<dbReference type="InterPro" id="IPR003796">
    <property type="entry name" value="RNR_NrdR-like"/>
</dbReference>
<dbReference type="NCBIfam" id="TIGR00244">
    <property type="entry name" value="transcriptional regulator NrdR"/>
    <property type="match status" value="1"/>
</dbReference>
<dbReference type="PANTHER" id="PTHR30455">
    <property type="entry name" value="TRANSCRIPTIONAL REPRESSOR NRDR"/>
    <property type="match status" value="1"/>
</dbReference>
<dbReference type="PANTHER" id="PTHR30455:SF2">
    <property type="entry name" value="TRANSCRIPTIONAL REPRESSOR NRDR"/>
    <property type="match status" value="1"/>
</dbReference>
<dbReference type="Pfam" id="PF03477">
    <property type="entry name" value="ATP-cone"/>
    <property type="match status" value="1"/>
</dbReference>
<dbReference type="Pfam" id="PF22811">
    <property type="entry name" value="Zn_ribbon_NrdR"/>
    <property type="match status" value="1"/>
</dbReference>
<dbReference type="PROSITE" id="PS51161">
    <property type="entry name" value="ATP_CONE"/>
    <property type="match status" value="1"/>
</dbReference>